<keyword id="KW-0067">ATP-binding</keyword>
<keyword id="KW-0143">Chaperone</keyword>
<keyword id="KW-0479">Metal-binding</keyword>
<keyword id="KW-0547">Nucleotide-binding</keyword>
<keyword id="KW-1185">Reference proteome</keyword>
<keyword id="KW-0862">Zinc</keyword>
<reference key="1">
    <citation type="submission" date="2005-08" db="EMBL/GenBank/DDBJ databases">
        <title>Complete sequence of chromosome 1 of Nitrosospira multiformis ATCC 25196.</title>
        <authorList>
            <person name="Copeland A."/>
            <person name="Lucas S."/>
            <person name="Lapidus A."/>
            <person name="Barry K."/>
            <person name="Detter J.C."/>
            <person name="Glavina T."/>
            <person name="Hammon N."/>
            <person name="Israni S."/>
            <person name="Pitluck S."/>
            <person name="Chain P."/>
            <person name="Malfatti S."/>
            <person name="Shin M."/>
            <person name="Vergez L."/>
            <person name="Schmutz J."/>
            <person name="Larimer F."/>
            <person name="Land M."/>
            <person name="Hauser L."/>
            <person name="Kyrpides N."/>
            <person name="Lykidis A."/>
            <person name="Richardson P."/>
        </authorList>
    </citation>
    <scope>NUCLEOTIDE SEQUENCE [LARGE SCALE GENOMIC DNA]</scope>
    <source>
        <strain>ATCC 25196 / NCIMB 11849 / C 71</strain>
    </source>
</reference>
<name>CLPX_NITMU</name>
<gene>
    <name evidence="1" type="primary">clpX</name>
    <name type="ordered locus">Nmul_A2339</name>
</gene>
<sequence>MSEKTGGEKLLYCSFCGKSQHEVKKLIAGPSVFICDECIELCNDIIREEIQGVEAAKLAKSDLPVPHEIRQILDQYVIGQEQAKKILSVAVYNHYKRLRTLAKSADPDEIELAKSNILLIGPTGSGKTLLAQTLARLLDVPFVMADATTLTEAGYVGEDVENIIQKLLQKCNYDAEKAQQGIVYIDEIDKISRKSDNPSITRDVSGEGVQQALLKLIEGTVASVPPQGGRKHPNQEFVQVDTTNILFICGGAFDGLEKIIRARSEKGGIGFSASVRSQDNRKDFGAVLRGVEPEDLVKYGLIPEFVGRLPVVATLEELDEAALIQILTEPRNALIKQYQKMFHMEGGIDLEFREQALKAIARKALVRKTGARGLRSILEAALLDTMFDLPSLENVAKVVIDHTSVNGDIKPILIYSDKPKVAKSC</sequence>
<protein>
    <recommendedName>
        <fullName evidence="1">ATP-dependent Clp protease ATP-binding subunit ClpX</fullName>
    </recommendedName>
</protein>
<dbReference type="EMBL" id="CP000103">
    <property type="protein sequence ID" value="ABB75630.1"/>
    <property type="molecule type" value="Genomic_DNA"/>
</dbReference>
<dbReference type="RefSeq" id="WP_011381633.1">
    <property type="nucleotide sequence ID" value="NC_007614.1"/>
</dbReference>
<dbReference type="SMR" id="Q2Y6J1"/>
<dbReference type="STRING" id="323848.Nmul_A2339"/>
<dbReference type="KEGG" id="nmu:Nmul_A2339"/>
<dbReference type="eggNOG" id="COG1219">
    <property type="taxonomic scope" value="Bacteria"/>
</dbReference>
<dbReference type="HOGENOM" id="CLU_014218_8_2_4"/>
<dbReference type="Proteomes" id="UP000002718">
    <property type="component" value="Chromosome"/>
</dbReference>
<dbReference type="GO" id="GO:0009376">
    <property type="term" value="C:HslUV protease complex"/>
    <property type="evidence" value="ECO:0007669"/>
    <property type="project" value="TreeGrafter"/>
</dbReference>
<dbReference type="GO" id="GO:0005524">
    <property type="term" value="F:ATP binding"/>
    <property type="evidence" value="ECO:0007669"/>
    <property type="project" value="UniProtKB-UniRule"/>
</dbReference>
<dbReference type="GO" id="GO:0016887">
    <property type="term" value="F:ATP hydrolysis activity"/>
    <property type="evidence" value="ECO:0007669"/>
    <property type="project" value="InterPro"/>
</dbReference>
<dbReference type="GO" id="GO:0140662">
    <property type="term" value="F:ATP-dependent protein folding chaperone"/>
    <property type="evidence" value="ECO:0007669"/>
    <property type="project" value="InterPro"/>
</dbReference>
<dbReference type="GO" id="GO:0046983">
    <property type="term" value="F:protein dimerization activity"/>
    <property type="evidence" value="ECO:0007669"/>
    <property type="project" value="InterPro"/>
</dbReference>
<dbReference type="GO" id="GO:0051082">
    <property type="term" value="F:unfolded protein binding"/>
    <property type="evidence" value="ECO:0007669"/>
    <property type="project" value="UniProtKB-UniRule"/>
</dbReference>
<dbReference type="GO" id="GO:0008270">
    <property type="term" value="F:zinc ion binding"/>
    <property type="evidence" value="ECO:0007669"/>
    <property type="project" value="InterPro"/>
</dbReference>
<dbReference type="GO" id="GO:0051301">
    <property type="term" value="P:cell division"/>
    <property type="evidence" value="ECO:0007669"/>
    <property type="project" value="TreeGrafter"/>
</dbReference>
<dbReference type="GO" id="GO:0051603">
    <property type="term" value="P:proteolysis involved in protein catabolic process"/>
    <property type="evidence" value="ECO:0007669"/>
    <property type="project" value="TreeGrafter"/>
</dbReference>
<dbReference type="CDD" id="cd19497">
    <property type="entry name" value="RecA-like_ClpX"/>
    <property type="match status" value="1"/>
</dbReference>
<dbReference type="FunFam" id="1.10.8.60:FF:000002">
    <property type="entry name" value="ATP-dependent Clp protease ATP-binding subunit ClpX"/>
    <property type="match status" value="1"/>
</dbReference>
<dbReference type="FunFam" id="3.40.50.300:FF:000005">
    <property type="entry name" value="ATP-dependent Clp protease ATP-binding subunit ClpX"/>
    <property type="match status" value="1"/>
</dbReference>
<dbReference type="Gene3D" id="1.10.8.60">
    <property type="match status" value="1"/>
</dbReference>
<dbReference type="Gene3D" id="6.20.220.10">
    <property type="entry name" value="ClpX chaperone, C4-type zinc finger domain"/>
    <property type="match status" value="1"/>
</dbReference>
<dbReference type="Gene3D" id="3.40.50.300">
    <property type="entry name" value="P-loop containing nucleotide triphosphate hydrolases"/>
    <property type="match status" value="1"/>
</dbReference>
<dbReference type="HAMAP" id="MF_00175">
    <property type="entry name" value="ClpX"/>
    <property type="match status" value="1"/>
</dbReference>
<dbReference type="InterPro" id="IPR003593">
    <property type="entry name" value="AAA+_ATPase"/>
</dbReference>
<dbReference type="InterPro" id="IPR050052">
    <property type="entry name" value="ATP-dep_Clp_protease_ClpX"/>
</dbReference>
<dbReference type="InterPro" id="IPR003959">
    <property type="entry name" value="ATPase_AAA_core"/>
</dbReference>
<dbReference type="InterPro" id="IPR019489">
    <property type="entry name" value="Clp_ATPase_C"/>
</dbReference>
<dbReference type="InterPro" id="IPR004487">
    <property type="entry name" value="Clp_protease_ATP-bd_su_ClpX"/>
</dbReference>
<dbReference type="InterPro" id="IPR046425">
    <property type="entry name" value="ClpX_bact"/>
</dbReference>
<dbReference type="InterPro" id="IPR027417">
    <property type="entry name" value="P-loop_NTPase"/>
</dbReference>
<dbReference type="InterPro" id="IPR010603">
    <property type="entry name" value="Znf_CppX_C4"/>
</dbReference>
<dbReference type="InterPro" id="IPR038366">
    <property type="entry name" value="Znf_CppX_C4_sf"/>
</dbReference>
<dbReference type="NCBIfam" id="TIGR00382">
    <property type="entry name" value="clpX"/>
    <property type="match status" value="1"/>
</dbReference>
<dbReference type="NCBIfam" id="NF003745">
    <property type="entry name" value="PRK05342.1"/>
    <property type="match status" value="1"/>
</dbReference>
<dbReference type="PANTHER" id="PTHR48102:SF7">
    <property type="entry name" value="ATP-DEPENDENT CLP PROTEASE ATP-BINDING SUBUNIT CLPX-LIKE, MITOCHONDRIAL"/>
    <property type="match status" value="1"/>
</dbReference>
<dbReference type="PANTHER" id="PTHR48102">
    <property type="entry name" value="ATP-DEPENDENT CLP PROTEASE ATP-BINDING SUBUNIT CLPX-LIKE, MITOCHONDRIAL-RELATED"/>
    <property type="match status" value="1"/>
</dbReference>
<dbReference type="Pfam" id="PF07724">
    <property type="entry name" value="AAA_2"/>
    <property type="match status" value="1"/>
</dbReference>
<dbReference type="Pfam" id="PF10431">
    <property type="entry name" value="ClpB_D2-small"/>
    <property type="match status" value="1"/>
</dbReference>
<dbReference type="Pfam" id="PF06689">
    <property type="entry name" value="zf-C4_ClpX"/>
    <property type="match status" value="1"/>
</dbReference>
<dbReference type="SMART" id="SM00382">
    <property type="entry name" value="AAA"/>
    <property type="match status" value="1"/>
</dbReference>
<dbReference type="SMART" id="SM01086">
    <property type="entry name" value="ClpB_D2-small"/>
    <property type="match status" value="1"/>
</dbReference>
<dbReference type="SMART" id="SM00994">
    <property type="entry name" value="zf-C4_ClpX"/>
    <property type="match status" value="1"/>
</dbReference>
<dbReference type="SUPFAM" id="SSF57716">
    <property type="entry name" value="Glucocorticoid receptor-like (DNA-binding domain)"/>
    <property type="match status" value="1"/>
</dbReference>
<dbReference type="SUPFAM" id="SSF52540">
    <property type="entry name" value="P-loop containing nucleoside triphosphate hydrolases"/>
    <property type="match status" value="1"/>
</dbReference>
<dbReference type="PROSITE" id="PS51902">
    <property type="entry name" value="CLPX_ZB"/>
    <property type="match status" value="1"/>
</dbReference>
<proteinExistence type="inferred from homology"/>
<organism>
    <name type="scientific">Nitrosospira multiformis (strain ATCC 25196 / NCIMB 11849 / C 71)</name>
    <dbReference type="NCBI Taxonomy" id="323848"/>
    <lineage>
        <taxon>Bacteria</taxon>
        <taxon>Pseudomonadati</taxon>
        <taxon>Pseudomonadota</taxon>
        <taxon>Betaproteobacteria</taxon>
        <taxon>Nitrosomonadales</taxon>
        <taxon>Nitrosomonadaceae</taxon>
        <taxon>Nitrosospira</taxon>
    </lineage>
</organism>
<comment type="function">
    <text evidence="1">ATP-dependent specificity component of the Clp protease. It directs the protease to specific substrates. Can perform chaperone functions in the absence of ClpP.</text>
</comment>
<comment type="subunit">
    <text evidence="1">Component of the ClpX-ClpP complex. Forms a hexameric ring that, in the presence of ATP, binds to fourteen ClpP subunits assembled into a disk-like structure with a central cavity, resembling the structure of eukaryotic proteasomes.</text>
</comment>
<comment type="similarity">
    <text evidence="1">Belongs to the ClpX chaperone family.</text>
</comment>
<accession>Q2Y6J1</accession>
<evidence type="ECO:0000255" key="1">
    <source>
        <dbReference type="HAMAP-Rule" id="MF_00175"/>
    </source>
</evidence>
<evidence type="ECO:0000255" key="2">
    <source>
        <dbReference type="PROSITE-ProRule" id="PRU01250"/>
    </source>
</evidence>
<feature type="chain" id="PRO_1000024599" description="ATP-dependent Clp protease ATP-binding subunit ClpX">
    <location>
        <begin position="1"/>
        <end position="425"/>
    </location>
</feature>
<feature type="domain" description="ClpX-type ZB" evidence="2">
    <location>
        <begin position="1"/>
        <end position="54"/>
    </location>
</feature>
<feature type="binding site" evidence="2">
    <location>
        <position position="13"/>
    </location>
    <ligand>
        <name>Zn(2+)</name>
        <dbReference type="ChEBI" id="CHEBI:29105"/>
    </ligand>
</feature>
<feature type="binding site" evidence="2">
    <location>
        <position position="16"/>
    </location>
    <ligand>
        <name>Zn(2+)</name>
        <dbReference type="ChEBI" id="CHEBI:29105"/>
    </ligand>
</feature>
<feature type="binding site" evidence="2">
    <location>
        <position position="35"/>
    </location>
    <ligand>
        <name>Zn(2+)</name>
        <dbReference type="ChEBI" id="CHEBI:29105"/>
    </ligand>
</feature>
<feature type="binding site" evidence="2">
    <location>
        <position position="38"/>
    </location>
    <ligand>
        <name>Zn(2+)</name>
        <dbReference type="ChEBI" id="CHEBI:29105"/>
    </ligand>
</feature>
<feature type="binding site" evidence="1">
    <location>
        <begin position="122"/>
        <end position="129"/>
    </location>
    <ligand>
        <name>ATP</name>
        <dbReference type="ChEBI" id="CHEBI:30616"/>
    </ligand>
</feature>